<dbReference type="EMBL" id="AF114160">
    <property type="protein sequence ID" value="AAD26161.2"/>
    <property type="molecule type" value="mRNA"/>
</dbReference>
<dbReference type="EMBL" id="AE013599">
    <property type="protein sequence ID" value="EAA46003.3"/>
    <property type="molecule type" value="Genomic_DNA"/>
</dbReference>
<dbReference type="EMBL" id="AE013599">
    <property type="protein sequence ID" value="EAA46004.3"/>
    <property type="molecule type" value="Genomic_DNA"/>
</dbReference>
<dbReference type="EMBL" id="BT029134">
    <property type="protein sequence ID" value="ABJ17067.1"/>
    <property type="status" value="ALT_TERM"/>
    <property type="molecule type" value="mRNA"/>
</dbReference>
<dbReference type="EMBL" id="BT029135">
    <property type="protein sequence ID" value="ABJ17068.1"/>
    <property type="molecule type" value="mRNA"/>
</dbReference>
<dbReference type="RefSeq" id="NP_001036451.1">
    <property type="nucleotide sequence ID" value="NM_001042986.3"/>
</dbReference>
<dbReference type="RefSeq" id="NP_001036452.1">
    <property type="nucleotide sequence ID" value="NM_001042987.3"/>
</dbReference>
<dbReference type="SMR" id="Q7PLI2"/>
<dbReference type="BioGRID" id="78261">
    <property type="interactions" value="24"/>
</dbReference>
<dbReference type="DIP" id="DIP-29198N"/>
<dbReference type="FunCoup" id="Q7PLI2">
    <property type="interactions" value="1770"/>
</dbReference>
<dbReference type="IntAct" id="Q7PLI2">
    <property type="interactions" value="2"/>
</dbReference>
<dbReference type="STRING" id="7227.FBpp0110411"/>
<dbReference type="GlyGen" id="Q7PLI2">
    <property type="glycosylation" value="1 site, 1 O-linked glycan (1 site)"/>
</dbReference>
<dbReference type="iPTMnet" id="Q7PLI2"/>
<dbReference type="PaxDb" id="7227-FBpp0110411"/>
<dbReference type="EnsemblMetazoa" id="FBtr0111118">
    <property type="protein sequence ID" value="FBpp0110410"/>
    <property type="gene ID" value="FBgn0026401"/>
</dbReference>
<dbReference type="EnsemblMetazoa" id="FBtr0111119">
    <property type="protein sequence ID" value="FBpp0110411"/>
    <property type="gene ID" value="FBgn0026401"/>
</dbReference>
<dbReference type="GeneID" id="3355136"/>
<dbReference type="KEGG" id="dme:Dmel_CG17704"/>
<dbReference type="AGR" id="FB:FBgn0026401"/>
<dbReference type="CTD" id="3355136"/>
<dbReference type="FlyBase" id="FBgn0026401">
    <property type="gene designation" value="Nipped-B"/>
</dbReference>
<dbReference type="VEuPathDB" id="VectorBase:FBgn0026401"/>
<dbReference type="eggNOG" id="KOG1020">
    <property type="taxonomic scope" value="Eukaryota"/>
</dbReference>
<dbReference type="GeneTree" id="ENSGT00390000010427"/>
<dbReference type="InParanoid" id="Q7PLI2"/>
<dbReference type="OMA" id="GSTDWPA"/>
<dbReference type="OrthoDB" id="418242at2759"/>
<dbReference type="PhylomeDB" id="Q7PLI2"/>
<dbReference type="Reactome" id="R-DME-2470946">
    <property type="pathway name" value="Cohesin Loading onto Chromatin"/>
</dbReference>
<dbReference type="SignaLink" id="Q7PLI2"/>
<dbReference type="BioGRID-ORCS" id="3355136">
    <property type="hits" value="1 hit in 1 CRISPR screen"/>
</dbReference>
<dbReference type="GenomeRNAi" id="3355136"/>
<dbReference type="PRO" id="PR:Q7PLI2"/>
<dbReference type="Proteomes" id="UP000000803">
    <property type="component" value="Chromosome 2R"/>
</dbReference>
<dbReference type="Bgee" id="FBgn0026401">
    <property type="expression patterns" value="Expressed in spermatogonium in testis and 278 other cell types or tissues"/>
</dbReference>
<dbReference type="ExpressionAtlas" id="Q7PLI2">
    <property type="expression patterns" value="baseline and differential"/>
</dbReference>
<dbReference type="GO" id="GO:0000791">
    <property type="term" value="C:euchromatin"/>
    <property type="evidence" value="ECO:0000314"/>
    <property type="project" value="FlyBase"/>
</dbReference>
<dbReference type="GO" id="GO:0005634">
    <property type="term" value="C:nucleus"/>
    <property type="evidence" value="ECO:0000314"/>
    <property type="project" value="UniProtKB"/>
</dbReference>
<dbReference type="GO" id="GO:0005700">
    <property type="term" value="C:polytene chromosome"/>
    <property type="evidence" value="ECO:0000314"/>
    <property type="project" value="FlyBase"/>
</dbReference>
<dbReference type="GO" id="GO:0090694">
    <property type="term" value="C:Scc2-Scc4 cohesin loading complex"/>
    <property type="evidence" value="ECO:0000318"/>
    <property type="project" value="GO_Central"/>
</dbReference>
<dbReference type="GO" id="GO:0032116">
    <property type="term" value="C:SMC loading complex"/>
    <property type="evidence" value="ECO:0000250"/>
    <property type="project" value="UniProtKB"/>
</dbReference>
<dbReference type="GO" id="GO:0003682">
    <property type="term" value="F:chromatin binding"/>
    <property type="evidence" value="ECO:0000314"/>
    <property type="project" value="FlyBase"/>
</dbReference>
<dbReference type="GO" id="GO:0061775">
    <property type="term" value="F:cohesin loader activity"/>
    <property type="evidence" value="ECO:0000315"/>
    <property type="project" value="FlyBase"/>
</dbReference>
<dbReference type="GO" id="GO:0048854">
    <property type="term" value="P:brain morphogenesis"/>
    <property type="evidence" value="ECO:0000315"/>
    <property type="project" value="FlyBase"/>
</dbReference>
<dbReference type="GO" id="GO:0140588">
    <property type="term" value="P:chromatin looping"/>
    <property type="evidence" value="ECO:0000316"/>
    <property type="project" value="FlyBase"/>
</dbReference>
<dbReference type="GO" id="GO:0050802">
    <property type="term" value="P:circadian sleep/wake cycle, sleep"/>
    <property type="evidence" value="ECO:0000315"/>
    <property type="project" value="FlyBase"/>
</dbReference>
<dbReference type="GO" id="GO:0034087">
    <property type="term" value="P:establishment of mitotic sister chromatid cohesion"/>
    <property type="evidence" value="ECO:0000318"/>
    <property type="project" value="GO_Central"/>
</dbReference>
<dbReference type="GO" id="GO:0071169">
    <property type="term" value="P:establishment of protein localization to chromatin"/>
    <property type="evidence" value="ECO:0000318"/>
    <property type="project" value="GO_Central"/>
</dbReference>
<dbReference type="GO" id="GO:0007612">
    <property type="term" value="P:learning"/>
    <property type="evidence" value="ECO:0000315"/>
    <property type="project" value="FlyBase"/>
</dbReference>
<dbReference type="GO" id="GO:0034088">
    <property type="term" value="P:maintenance of mitotic sister chromatid cohesion"/>
    <property type="evidence" value="ECO:0000250"/>
    <property type="project" value="UniProtKB"/>
</dbReference>
<dbReference type="GO" id="GO:0007064">
    <property type="term" value="P:mitotic sister chromatid cohesion"/>
    <property type="evidence" value="ECO:0000315"/>
    <property type="project" value="UniProtKB"/>
</dbReference>
<dbReference type="GO" id="GO:0045793">
    <property type="term" value="P:positive regulation of cell size"/>
    <property type="evidence" value="ECO:0000315"/>
    <property type="project" value="FlyBase"/>
</dbReference>
<dbReference type="GO" id="GO:0045893">
    <property type="term" value="P:positive regulation of DNA-templated transcription"/>
    <property type="evidence" value="ECO:0000315"/>
    <property type="project" value="UniProtKB"/>
</dbReference>
<dbReference type="GO" id="GO:0010628">
    <property type="term" value="P:positive regulation of gene expression"/>
    <property type="evidence" value="ECO:0000315"/>
    <property type="project" value="FlyBase"/>
</dbReference>
<dbReference type="GO" id="GO:0045927">
    <property type="term" value="P:positive regulation of growth"/>
    <property type="evidence" value="ECO:0000315"/>
    <property type="project" value="FlyBase"/>
</dbReference>
<dbReference type="GO" id="GO:0006355">
    <property type="term" value="P:regulation of DNA-templated transcription"/>
    <property type="evidence" value="ECO:0000315"/>
    <property type="project" value="UniProtKB"/>
</dbReference>
<dbReference type="GO" id="GO:1990414">
    <property type="term" value="P:replication-born double-strand break repair via sister chromatid exchange"/>
    <property type="evidence" value="ECO:0000318"/>
    <property type="project" value="GO_Central"/>
</dbReference>
<dbReference type="GO" id="GO:0007614">
    <property type="term" value="P:short-term memory"/>
    <property type="evidence" value="ECO:0000315"/>
    <property type="project" value="FlyBase"/>
</dbReference>
<dbReference type="GO" id="GO:0007130">
    <property type="term" value="P:synaptonemal complex assembly"/>
    <property type="evidence" value="ECO:0000315"/>
    <property type="project" value="FlyBase"/>
</dbReference>
<dbReference type="GO" id="GO:0070193">
    <property type="term" value="P:synaptonemal complex organization"/>
    <property type="evidence" value="ECO:0000315"/>
    <property type="project" value="FlyBase"/>
</dbReference>
<dbReference type="CDD" id="cd23958">
    <property type="entry name" value="SCC2"/>
    <property type="match status" value="1"/>
</dbReference>
<dbReference type="InterPro" id="IPR016024">
    <property type="entry name" value="ARM-type_fold"/>
</dbReference>
<dbReference type="InterPro" id="IPR026003">
    <property type="entry name" value="Cohesin_HEAT"/>
</dbReference>
<dbReference type="InterPro" id="IPR024986">
    <property type="entry name" value="Nipped-B_C"/>
</dbReference>
<dbReference type="InterPro" id="IPR033031">
    <property type="entry name" value="Scc2/Nipped-B"/>
</dbReference>
<dbReference type="PANTHER" id="PTHR21704:SF18">
    <property type="entry name" value="NIPPED-B-LIKE PROTEIN"/>
    <property type="match status" value="1"/>
</dbReference>
<dbReference type="PANTHER" id="PTHR21704">
    <property type="entry name" value="NIPPED-B-LIKE PROTEIN DELANGIN SCC2-RELATED"/>
    <property type="match status" value="1"/>
</dbReference>
<dbReference type="Pfam" id="PF12765">
    <property type="entry name" value="Cohesin_HEAT"/>
    <property type="match status" value="1"/>
</dbReference>
<dbReference type="Pfam" id="PF12830">
    <property type="entry name" value="Nipped-B_C"/>
    <property type="match status" value="1"/>
</dbReference>
<dbReference type="SUPFAM" id="SSF48371">
    <property type="entry name" value="ARM repeat"/>
    <property type="match status" value="1"/>
</dbReference>
<reference key="1">
    <citation type="journal article" date="1999" name="Genetics">
        <title>Nipped-B, a Drosophila homologue of chromosomal adherins, participates in activation by remote enhancers in the cut and Ultrabithorax genes.</title>
        <authorList>
            <person name="Rollins R.A."/>
            <person name="Morcillo P."/>
            <person name="Dorsett D."/>
        </authorList>
    </citation>
    <scope>NUCLEOTIDE SEQUENCE [MRNA]</scope>
</reference>
<reference key="2">
    <citation type="journal article" date="2000" name="Science">
        <title>The genome sequence of Drosophila melanogaster.</title>
        <authorList>
            <person name="Adams M.D."/>
            <person name="Celniker S.E."/>
            <person name="Holt R.A."/>
            <person name="Evans C.A."/>
            <person name="Gocayne J.D."/>
            <person name="Amanatides P.G."/>
            <person name="Scherer S.E."/>
            <person name="Li P.W."/>
            <person name="Hoskins R.A."/>
            <person name="Galle R.F."/>
            <person name="George R.A."/>
            <person name="Lewis S.E."/>
            <person name="Richards S."/>
            <person name="Ashburner M."/>
            <person name="Henderson S.N."/>
            <person name="Sutton G.G."/>
            <person name="Wortman J.R."/>
            <person name="Yandell M.D."/>
            <person name="Zhang Q."/>
            <person name="Chen L.X."/>
            <person name="Brandon R.C."/>
            <person name="Rogers Y.-H.C."/>
            <person name="Blazej R.G."/>
            <person name="Champe M."/>
            <person name="Pfeiffer B.D."/>
            <person name="Wan K.H."/>
            <person name="Doyle C."/>
            <person name="Baxter E.G."/>
            <person name="Helt G."/>
            <person name="Nelson C.R."/>
            <person name="Miklos G.L.G."/>
            <person name="Abril J.F."/>
            <person name="Agbayani A."/>
            <person name="An H.-J."/>
            <person name="Andrews-Pfannkoch C."/>
            <person name="Baldwin D."/>
            <person name="Ballew R.M."/>
            <person name="Basu A."/>
            <person name="Baxendale J."/>
            <person name="Bayraktaroglu L."/>
            <person name="Beasley E.M."/>
            <person name="Beeson K.Y."/>
            <person name="Benos P.V."/>
            <person name="Berman B.P."/>
            <person name="Bhandari D."/>
            <person name="Bolshakov S."/>
            <person name="Borkova D."/>
            <person name="Botchan M.R."/>
            <person name="Bouck J."/>
            <person name="Brokstein P."/>
            <person name="Brottier P."/>
            <person name="Burtis K.C."/>
            <person name="Busam D.A."/>
            <person name="Butler H."/>
            <person name="Cadieu E."/>
            <person name="Center A."/>
            <person name="Chandra I."/>
            <person name="Cherry J.M."/>
            <person name="Cawley S."/>
            <person name="Dahlke C."/>
            <person name="Davenport L.B."/>
            <person name="Davies P."/>
            <person name="de Pablos B."/>
            <person name="Delcher A."/>
            <person name="Deng Z."/>
            <person name="Mays A.D."/>
            <person name="Dew I."/>
            <person name="Dietz S.M."/>
            <person name="Dodson K."/>
            <person name="Doup L.E."/>
            <person name="Downes M."/>
            <person name="Dugan-Rocha S."/>
            <person name="Dunkov B.C."/>
            <person name="Dunn P."/>
            <person name="Durbin K.J."/>
            <person name="Evangelista C.C."/>
            <person name="Ferraz C."/>
            <person name="Ferriera S."/>
            <person name="Fleischmann W."/>
            <person name="Fosler C."/>
            <person name="Gabrielian A.E."/>
            <person name="Garg N.S."/>
            <person name="Gelbart W.M."/>
            <person name="Glasser K."/>
            <person name="Glodek A."/>
            <person name="Gong F."/>
            <person name="Gorrell J.H."/>
            <person name="Gu Z."/>
            <person name="Guan P."/>
            <person name="Harris M."/>
            <person name="Harris N.L."/>
            <person name="Harvey D.A."/>
            <person name="Heiman T.J."/>
            <person name="Hernandez J.R."/>
            <person name="Houck J."/>
            <person name="Hostin D."/>
            <person name="Houston K.A."/>
            <person name="Howland T.J."/>
            <person name="Wei M.-H."/>
            <person name="Ibegwam C."/>
            <person name="Jalali M."/>
            <person name="Kalush F."/>
            <person name="Karpen G.H."/>
            <person name="Ke Z."/>
            <person name="Kennison J.A."/>
            <person name="Ketchum K.A."/>
            <person name="Kimmel B.E."/>
            <person name="Kodira C.D."/>
            <person name="Kraft C.L."/>
            <person name="Kravitz S."/>
            <person name="Kulp D."/>
            <person name="Lai Z."/>
            <person name="Lasko P."/>
            <person name="Lei Y."/>
            <person name="Levitsky A.A."/>
            <person name="Li J.H."/>
            <person name="Li Z."/>
            <person name="Liang Y."/>
            <person name="Lin X."/>
            <person name="Liu X."/>
            <person name="Mattei B."/>
            <person name="McIntosh T.C."/>
            <person name="McLeod M.P."/>
            <person name="McPherson D."/>
            <person name="Merkulov G."/>
            <person name="Milshina N.V."/>
            <person name="Mobarry C."/>
            <person name="Morris J."/>
            <person name="Moshrefi A."/>
            <person name="Mount S.M."/>
            <person name="Moy M."/>
            <person name="Murphy B."/>
            <person name="Murphy L."/>
            <person name="Muzny D.M."/>
            <person name="Nelson D.L."/>
            <person name="Nelson D.R."/>
            <person name="Nelson K.A."/>
            <person name="Nixon K."/>
            <person name="Nusskern D.R."/>
            <person name="Pacleb J.M."/>
            <person name="Palazzolo M."/>
            <person name="Pittman G.S."/>
            <person name="Pan S."/>
            <person name="Pollard J."/>
            <person name="Puri V."/>
            <person name="Reese M.G."/>
            <person name="Reinert K."/>
            <person name="Remington K."/>
            <person name="Saunders R.D.C."/>
            <person name="Scheeler F."/>
            <person name="Shen H."/>
            <person name="Shue B.C."/>
            <person name="Siden-Kiamos I."/>
            <person name="Simpson M."/>
            <person name="Skupski M.P."/>
            <person name="Smith T.J."/>
            <person name="Spier E."/>
            <person name="Spradling A.C."/>
            <person name="Stapleton M."/>
            <person name="Strong R."/>
            <person name="Sun E."/>
            <person name="Svirskas R."/>
            <person name="Tector C."/>
            <person name="Turner R."/>
            <person name="Venter E."/>
            <person name="Wang A.H."/>
            <person name="Wang X."/>
            <person name="Wang Z.-Y."/>
            <person name="Wassarman D.A."/>
            <person name="Weinstock G.M."/>
            <person name="Weissenbach J."/>
            <person name="Williams S.M."/>
            <person name="Woodage T."/>
            <person name="Worley K.C."/>
            <person name="Wu D."/>
            <person name="Yang S."/>
            <person name="Yao Q.A."/>
            <person name="Ye J."/>
            <person name="Yeh R.-F."/>
            <person name="Zaveri J.S."/>
            <person name="Zhan M."/>
            <person name="Zhang G."/>
            <person name="Zhao Q."/>
            <person name="Zheng L."/>
            <person name="Zheng X.H."/>
            <person name="Zhong F.N."/>
            <person name="Zhong W."/>
            <person name="Zhou X."/>
            <person name="Zhu S.C."/>
            <person name="Zhu X."/>
            <person name="Smith H.O."/>
            <person name="Gibbs R.A."/>
            <person name="Myers E.W."/>
            <person name="Rubin G.M."/>
            <person name="Venter J.C."/>
        </authorList>
    </citation>
    <scope>NUCLEOTIDE SEQUENCE [LARGE SCALE GENOMIC DNA]</scope>
    <source>
        <strain>Berkeley</strain>
    </source>
</reference>
<reference key="3">
    <citation type="journal article" date="2002" name="Genome Biol.">
        <title>Annotation of the Drosophila melanogaster euchromatic genome: a systematic review.</title>
        <authorList>
            <person name="Misra S."/>
            <person name="Crosby M.A."/>
            <person name="Mungall C.J."/>
            <person name="Matthews B.B."/>
            <person name="Campbell K.S."/>
            <person name="Hradecky P."/>
            <person name="Huang Y."/>
            <person name="Kaminker J.S."/>
            <person name="Millburn G.H."/>
            <person name="Prochnik S.E."/>
            <person name="Smith C.D."/>
            <person name="Tupy J.L."/>
            <person name="Whitfield E.J."/>
            <person name="Bayraktaroglu L."/>
            <person name="Berman B.P."/>
            <person name="Bettencourt B.R."/>
            <person name="Celniker S.E."/>
            <person name="de Grey A.D.N.J."/>
            <person name="Drysdale R.A."/>
            <person name="Harris N.L."/>
            <person name="Richter J."/>
            <person name="Russo S."/>
            <person name="Schroeder A.J."/>
            <person name="Shu S.Q."/>
            <person name="Stapleton M."/>
            <person name="Yamada C."/>
            <person name="Ashburner M."/>
            <person name="Gelbart W.M."/>
            <person name="Rubin G.M."/>
            <person name="Lewis S.E."/>
        </authorList>
    </citation>
    <scope>GENOME REANNOTATION</scope>
    <source>
        <strain>Berkeley</strain>
    </source>
</reference>
<reference key="4">
    <citation type="submission" date="2006-10" db="EMBL/GenBank/DDBJ databases">
        <authorList>
            <person name="Stapleton M."/>
            <person name="Carlson J.W."/>
            <person name="Frise E."/>
            <person name="Kapadia B."/>
            <person name="Park S."/>
            <person name="Wan K.H."/>
            <person name="Yu C."/>
            <person name="Celniker S.E."/>
        </authorList>
    </citation>
    <scope>NUCLEOTIDE SEQUENCE [LARGE SCALE MRNA] OF 1177-2077</scope>
    <source>
        <strain>Berkeley</strain>
        <tissue>Embryo</tissue>
    </source>
</reference>
<reference key="5">
    <citation type="journal article" date="2004" name="Mol. Cell. Biol.">
        <title>Drosophila nipped-B protein supports sister chromatid cohesion and opposes the stromalin/Scc3 cohesion factor to facilitate long-range activation of the cut gene.</title>
        <authorList>
            <person name="Rollins R.A."/>
            <person name="Korom M."/>
            <person name="Aulner N."/>
            <person name="Martens A."/>
            <person name="Dorsett D."/>
        </authorList>
    </citation>
    <scope>FUNCTION</scope>
    <scope>SUBCELLULAR LOCATION</scope>
    <scope>TISSUE SPECIFICITY</scope>
    <scope>DEVELOPMENTAL STAGE</scope>
</reference>
<reference key="6">
    <citation type="journal article" date="2008" name="J. Proteome Res.">
        <title>Phosphoproteome analysis of Drosophila melanogaster embryos.</title>
        <authorList>
            <person name="Zhai B."/>
            <person name="Villen J."/>
            <person name="Beausoleil S.A."/>
            <person name="Mintseris J."/>
            <person name="Gygi S.P."/>
        </authorList>
    </citation>
    <scope>PHOSPHORYLATION [LARGE SCALE ANALYSIS] AT SER-1986; SER-1991; SER-2066 AND THR-2067</scope>
    <scope>IDENTIFICATION BY MASS SPECTROMETRY</scope>
    <source>
        <tissue>Embryo</tissue>
    </source>
</reference>
<keyword id="KW-0010">Activator</keyword>
<keyword id="KW-0131">Cell cycle</keyword>
<keyword id="KW-0539">Nucleus</keyword>
<keyword id="KW-0597">Phosphoprotein</keyword>
<keyword id="KW-1185">Reference proteome</keyword>
<keyword id="KW-0677">Repeat</keyword>
<keyword id="KW-0804">Transcription</keyword>
<keyword id="KW-0805">Transcription regulation</keyword>
<sequence length="2077" mass="236729">MGERDNPTVPVTTLAGLTSTSDLLSELPVADSLQSAASLNKSLLFHALVANESSNLLSMRNENLVRQLVTAIERTNSDNIELIHCPVQDTATNCSTYPELLQGIYHFRPAVFNTSIKIHSPDQHTANARLEAKKMQIDSYSIPECYASPTNLSISNEHQLQDAQACFNQLTSMTSKEILEEFSQINFKENATEKDKIDVIENSDLNVTKILSQNTLKKKSNTPERSTVQSIQEQFFIQQQEANYNLKHDLNQVSTNVGQIQNISDTFPQEPSNFNLNSVNIPNMLYVQSPPFTESEPTQAHHSSIEYLKKKKSQILDVSILNRQQVLENTSLHIINKSSTYQTNQNVSTTTSTSTSSSGKSQVRVCINRLSIEDSRLMQQSIKKFVQKSPELARSMGLLQETCQQQHENLNIIPTSAEECVLESRASSTNNTVKIPIDTFSTIKADEKRSAKRKLAISIGDIPPEQIFSKPKMRRVERITPLSNTKCVKEEVTRSQTYQQFIRNMDHIIEILDDSESPNFDSEDVDETIECISSKLLNSMSTDVAKLKAKQALDSIPKNKLTLLINYAMRNVYLARNYFAGTEDEDEFVDDEVIEKLLNAMDACLLICNIYSTVSDLQFLQEDNVSHIIKFTQFQLRETIFPLHDPVYTAKSIKRTTHRKKIKSHQAQNRSMQLFYLKTVELLKVFVTLFDKCVFVDTIVLPLSTLAIEPFFVDNIETLQFVCLELVTTIFRKERYDKIRNSILGDILTSIDRLPSSKKNLRPYKLTNNGGNIQMVTALVLQLIQCATILPDSLCDNGKFSNKPQEGNTFDEEGKKLLQPSQDLLVLQKYDVAVSIGGNFLTTFLNKCKSRSNETDFRPLFENFIHDLLATVNKPEWPASELLLSLLGTMLVRYVSDKGIEQSIRLVSLDYLGIVAARLRKDTVESRCRVNIIDSMIQSIKLEQEKEGDVTSNNDQFDLEPEEQRTDFLQKILLDFLAVNAQEENLIWDYARHFYLAQWYRDVIYQRRRINDGKKGLAFRKSKIRNNRRTNGDYLDTSDSGSCDESDTDTNKKRIHCVDSNDFELNINIYKALEARKQYFINKIKPFSVFGEQNHSSNQHIKTYIDYNNAQLIAQYLATKRPFSQSFDGCLKKIILVVNEPSIAVRTRAMKCLANIVEVDPLVLKRKDMQMGVNQKFLDTAISVREAAVDLVGKFVLSNQDLIDQYYDMLSTRILDTGVSVRKRVIKILRDICLEYPDFSKIPEICVKMIRRVHDEEGIQKLVTEVFMKMWFTPCTKNDKIGIQRKINHIIDVVNTAHDTGTTWLEGLLMSIFKPRDNMLRSEGCVQEFIKKNSEPPMDIVIACQQLADGLVDRLIELEDTDNSRMLGCITTLHLLAKVRPQLLVKHAITIEPYLNIKCHSATAAKFICAVADILEKVVPLVNNASESFLASLEEHLMLLVVSRNQAEVTSCVSCLGALVNKITHNFKLIRDCFQKFYRVLDVSRSQVIQGNNSVDNIYTPSFRRSLFTIGILMRYFDFKSPIALGETNDGLPVSICEDVFHCLMFFCRCTNQEIRKQALISLGSFCVLNDGYLTRSELKNLYCEILSSIANDAGFKIICMRNIWIYLTESEMFMHNKEKEWEKQSKHEDLKEMNDVSSGMASRIIQLYLEEILECFLNRDDTVRLWAVKVIQIVLRQGLVHPVRMVPYLICLSTDHRIESAHRADALLKDIDKTYSGFVNMKVQFGLQLCFKLQKILQINNRGKLEIIRGYASRGPDNTTTALNDFLYTLLRTTKPQRRALVQTVTKQFDDQKTSLQQMLYIADNLAYFPYVVQDEPLYLIHQIDLLISMAGTHLLATFKEHIKPSDKEGDVLEDDDDVEDPEVLFNRLPEDLTEIIKCITSAQACMLLLILKDHLKEMYAITDSKISRYSPSEQKLYEKAVTRKSVNDFNPKTTIDVIKKQMSQEKLSTDINFTLTKEEKLDLVVKYLDFKQLMLKLDPDDGDSDADESRDKTMLNISASSDGVAFSSSAKNSHSACDGYSLTVTDVVDVPMSHIAKASMLTSKPSGRKTNPVRTKKKRRKIDSTDDETSDAEYA</sequence>
<proteinExistence type="evidence at protein level"/>
<gene>
    <name type="primary">Nipped-B</name>
    <name type="ORF">CG17704</name>
</gene>
<evidence type="ECO:0000256" key="1">
    <source>
        <dbReference type="SAM" id="MobiDB-lite"/>
    </source>
</evidence>
<evidence type="ECO:0000269" key="2">
    <source>
    </source>
</evidence>
<evidence type="ECO:0000269" key="3">
    <source>
    </source>
</evidence>
<evidence type="ECO:0000305" key="4"/>
<comment type="function">
    <text evidence="2">Plays a structural role in chromatin. Involved in sister chromatid cohesion, probably via an interaction with the cohesin complex. Participates in the transcriptional activation mediated by remote enhancers on genes such as cut and Ubx, possibly by alleviating the cohesin-mediated blocking of enhancer-promoter communication.</text>
</comment>
<comment type="subcellular location">
    <subcellularLocation>
        <location evidence="2">Nucleus</location>
    </subcellularLocation>
</comment>
<comment type="tissue specificity">
    <text evidence="2">Ubiquitous. Expressed in all interphase nuclei in embryo, third instar imaginal disks, salivary glands and fat tissues.</text>
</comment>
<comment type="developmental stage">
    <text evidence="2">Expressed both maternally and zygotically.</text>
</comment>
<comment type="similarity">
    <text evidence="4">Belongs to the SCC2/Nipped-B family.</text>
</comment>
<comment type="sequence caution" evidence="4">
    <conflict type="miscellaneous discrepancy">
        <sequence resource="EMBL-CDS" id="ABJ17067"/>
    </conflict>
    <text>Contaminating sequence. Potential poly-A sequence starting in position 2061.</text>
</comment>
<feature type="chain" id="PRO_0000218599" description="Nipped-B protein">
    <location>
        <begin position="1"/>
        <end position="2077"/>
    </location>
</feature>
<feature type="repeat" description="HEAT 1">
    <location>
        <begin position="1128"/>
        <end position="1159"/>
    </location>
</feature>
<feature type="repeat" description="HEAT 2">
    <location>
        <begin position="1167"/>
        <end position="1198"/>
    </location>
</feature>
<feature type="repeat" description="HEAT 3">
    <location>
        <begin position="1200"/>
        <end position="1235"/>
    </location>
</feature>
<feature type="repeat" description="HEAT 4">
    <location>
        <begin position="1240"/>
        <end position="1273"/>
    </location>
</feature>
<feature type="repeat" description="HEAT 5">
    <location>
        <begin position="1538"/>
        <end position="1569"/>
    </location>
</feature>
<feature type="repeat" description="HEAT 6">
    <location>
        <begin position="1647"/>
        <end position="1678"/>
    </location>
</feature>
<feature type="repeat" description="HEAT 7">
    <location>
        <begin position="1684"/>
        <end position="1715"/>
    </location>
</feature>
<feature type="region of interest" description="Disordered" evidence="1">
    <location>
        <begin position="1030"/>
        <end position="1049"/>
    </location>
</feature>
<feature type="region of interest" description="Disordered" evidence="1">
    <location>
        <begin position="2039"/>
        <end position="2077"/>
    </location>
</feature>
<feature type="compositionally biased region" description="Polar residues" evidence="1">
    <location>
        <begin position="2042"/>
        <end position="2055"/>
    </location>
</feature>
<feature type="compositionally biased region" description="Acidic residues" evidence="1">
    <location>
        <begin position="2067"/>
        <end position="2077"/>
    </location>
</feature>
<feature type="modified residue" description="Phosphoserine" evidence="3">
    <location>
        <position position="1986"/>
    </location>
</feature>
<feature type="modified residue" description="Phosphoserine" evidence="3">
    <location>
        <position position="1991"/>
    </location>
</feature>
<feature type="modified residue" description="Phosphoserine" evidence="3">
    <location>
        <position position="2066"/>
    </location>
</feature>
<feature type="modified residue" description="Phosphothreonine" evidence="3">
    <location>
        <position position="2067"/>
    </location>
</feature>
<feature type="sequence conflict" description="In Ref. 1; AAD26161." evidence="4" ref="1">
    <original>L</original>
    <variation>F</variation>
    <location>
        <position position="308"/>
    </location>
</feature>
<feature type="sequence conflict" description="In Ref. 1; AAD26161." evidence="4" ref="1">
    <original>T</original>
    <variation>N</variation>
    <location>
        <position position="657"/>
    </location>
</feature>
<name>NIPB_DROME</name>
<accession>Q7PLI2</accession>
<accession>A4UZ37</accession>
<accession>Q058T3</accession>
<accession>Q058T4</accession>
<accession>Q7PLI3</accession>
<accession>Q9XYM2</accession>
<protein>
    <recommendedName>
        <fullName>Nipped-B protein</fullName>
    </recommendedName>
    <alternativeName>
        <fullName>SCC2 homolog</fullName>
    </alternativeName>
</protein>
<organism>
    <name type="scientific">Drosophila melanogaster</name>
    <name type="common">Fruit fly</name>
    <dbReference type="NCBI Taxonomy" id="7227"/>
    <lineage>
        <taxon>Eukaryota</taxon>
        <taxon>Metazoa</taxon>
        <taxon>Ecdysozoa</taxon>
        <taxon>Arthropoda</taxon>
        <taxon>Hexapoda</taxon>
        <taxon>Insecta</taxon>
        <taxon>Pterygota</taxon>
        <taxon>Neoptera</taxon>
        <taxon>Endopterygota</taxon>
        <taxon>Diptera</taxon>
        <taxon>Brachycera</taxon>
        <taxon>Muscomorpha</taxon>
        <taxon>Ephydroidea</taxon>
        <taxon>Drosophilidae</taxon>
        <taxon>Drosophila</taxon>
        <taxon>Sophophora</taxon>
    </lineage>
</organism>